<gene>
    <name evidence="1" type="primary">fgd</name>
    <name type="ordered locus">NFA_53550</name>
</gene>
<dbReference type="EC" id="1.1.98.2" evidence="1"/>
<dbReference type="EMBL" id="AP006618">
    <property type="protein sequence ID" value="BAD60207.1"/>
    <property type="molecule type" value="Genomic_DNA"/>
</dbReference>
<dbReference type="RefSeq" id="WP_011211889.1">
    <property type="nucleotide sequence ID" value="NC_006361.1"/>
</dbReference>
<dbReference type="SMR" id="Q5YNN4"/>
<dbReference type="STRING" id="247156.NFA_53550"/>
<dbReference type="GeneID" id="61135930"/>
<dbReference type="KEGG" id="nfa:NFA_53550"/>
<dbReference type="eggNOG" id="COG2141">
    <property type="taxonomic scope" value="Bacteria"/>
</dbReference>
<dbReference type="HOGENOM" id="CLU_027853_4_0_11"/>
<dbReference type="OrthoDB" id="180193at2"/>
<dbReference type="Proteomes" id="UP000006820">
    <property type="component" value="Chromosome"/>
</dbReference>
<dbReference type="GO" id="GO:0070967">
    <property type="term" value="F:coenzyme F420 binding"/>
    <property type="evidence" value="ECO:0007669"/>
    <property type="project" value="UniProtKB-UniRule"/>
</dbReference>
<dbReference type="GO" id="GO:0052749">
    <property type="term" value="F:glucose-6-phosphate dehydrogenase (coenzyme F420) activity"/>
    <property type="evidence" value="ECO:0007669"/>
    <property type="project" value="UniProtKB-EC"/>
</dbReference>
<dbReference type="GO" id="GO:0016705">
    <property type="term" value="F:oxidoreductase activity, acting on paired donors, with incorporation or reduction of molecular oxygen"/>
    <property type="evidence" value="ECO:0007669"/>
    <property type="project" value="InterPro"/>
</dbReference>
<dbReference type="GO" id="GO:0005975">
    <property type="term" value="P:carbohydrate metabolic process"/>
    <property type="evidence" value="ECO:0007669"/>
    <property type="project" value="UniProtKB-UniRule"/>
</dbReference>
<dbReference type="CDD" id="cd01097">
    <property type="entry name" value="Tetrahydromethanopterin_reductase"/>
    <property type="match status" value="1"/>
</dbReference>
<dbReference type="Gene3D" id="3.20.20.30">
    <property type="entry name" value="Luciferase-like domain"/>
    <property type="match status" value="1"/>
</dbReference>
<dbReference type="HAMAP" id="MF_02123">
    <property type="entry name" value="F420_G6P_DH"/>
    <property type="match status" value="1"/>
</dbReference>
<dbReference type="InterPro" id="IPR019944">
    <property type="entry name" value="F420-dep_G6P_DH"/>
</dbReference>
<dbReference type="InterPro" id="IPR050564">
    <property type="entry name" value="F420-G6PD/mer"/>
</dbReference>
<dbReference type="InterPro" id="IPR019945">
    <property type="entry name" value="F420_G6P_DH-rel"/>
</dbReference>
<dbReference type="InterPro" id="IPR011251">
    <property type="entry name" value="Luciferase-like_dom"/>
</dbReference>
<dbReference type="InterPro" id="IPR036661">
    <property type="entry name" value="Luciferase-like_sf"/>
</dbReference>
<dbReference type="NCBIfam" id="TIGR03554">
    <property type="entry name" value="F420_G6P_DH"/>
    <property type="match status" value="1"/>
</dbReference>
<dbReference type="NCBIfam" id="TIGR03557">
    <property type="entry name" value="F420_G6P_family"/>
    <property type="match status" value="1"/>
</dbReference>
<dbReference type="PANTHER" id="PTHR43244">
    <property type="match status" value="1"/>
</dbReference>
<dbReference type="PANTHER" id="PTHR43244:SF1">
    <property type="entry name" value="5,10-METHYLENETETRAHYDROMETHANOPTERIN REDUCTASE"/>
    <property type="match status" value="1"/>
</dbReference>
<dbReference type="Pfam" id="PF00296">
    <property type="entry name" value="Bac_luciferase"/>
    <property type="match status" value="1"/>
</dbReference>
<dbReference type="SUPFAM" id="SSF51679">
    <property type="entry name" value="Bacterial luciferase-like"/>
    <property type="match status" value="1"/>
</dbReference>
<name>FGD_NOCFA</name>
<feature type="chain" id="PRO_0000413598" description="F420-dependent glucose-6-phosphate dehydrogenase">
    <location>
        <begin position="1"/>
        <end position="336"/>
    </location>
</feature>
<feature type="active site" description="Proton donor" evidence="1">
    <location>
        <position position="40"/>
    </location>
</feature>
<feature type="active site" description="Proton acceptor" evidence="1">
    <location>
        <position position="109"/>
    </location>
</feature>
<feature type="binding site" evidence="1">
    <location>
        <position position="39"/>
    </location>
    <ligand>
        <name>coenzyme F420-(gamma-Glu)n</name>
        <dbReference type="ChEBI" id="CHEBI:133980"/>
    </ligand>
</feature>
<feature type="binding site" evidence="1">
    <location>
        <position position="76"/>
    </location>
    <ligand>
        <name>coenzyme F420-(gamma-Glu)n</name>
        <dbReference type="ChEBI" id="CHEBI:133980"/>
    </ligand>
</feature>
<feature type="binding site" evidence="1">
    <location>
        <begin position="107"/>
        <end position="108"/>
    </location>
    <ligand>
        <name>coenzyme F420-(gamma-Glu)n</name>
        <dbReference type="ChEBI" id="CHEBI:133980"/>
    </ligand>
</feature>
<feature type="binding site" evidence="1">
    <location>
        <position position="112"/>
    </location>
    <ligand>
        <name>coenzyme F420-(gamma-Glu)n</name>
        <dbReference type="ChEBI" id="CHEBI:133980"/>
    </ligand>
</feature>
<feature type="binding site" evidence="1">
    <location>
        <begin position="177"/>
        <end position="178"/>
    </location>
    <ligand>
        <name>coenzyme F420-(gamma-Glu)n</name>
        <dbReference type="ChEBI" id="CHEBI:133980"/>
    </ligand>
</feature>
<feature type="binding site" evidence="1">
    <location>
        <begin position="180"/>
        <end position="181"/>
    </location>
    <ligand>
        <name>coenzyme F420-(gamma-Glu)n</name>
        <dbReference type="ChEBI" id="CHEBI:133980"/>
    </ligand>
</feature>
<feature type="binding site" evidence="1">
    <location>
        <position position="195"/>
    </location>
    <ligand>
        <name>substrate</name>
    </ligand>
</feature>
<feature type="binding site" evidence="1">
    <location>
        <position position="198"/>
    </location>
    <ligand>
        <name>substrate</name>
    </ligand>
</feature>
<feature type="binding site" evidence="1">
    <location>
        <position position="259"/>
    </location>
    <ligand>
        <name>substrate</name>
    </ligand>
</feature>
<feature type="binding site" evidence="1">
    <location>
        <position position="283"/>
    </location>
    <ligand>
        <name>substrate</name>
    </ligand>
</feature>
<proteinExistence type="inferred from homology"/>
<reference key="1">
    <citation type="journal article" date="2004" name="Proc. Natl. Acad. Sci. U.S.A.">
        <title>The complete genomic sequence of Nocardia farcinica IFM 10152.</title>
        <authorList>
            <person name="Ishikawa J."/>
            <person name="Yamashita A."/>
            <person name="Mikami Y."/>
            <person name="Hoshino Y."/>
            <person name="Kurita H."/>
            <person name="Hotta K."/>
            <person name="Shiba T."/>
            <person name="Hattori M."/>
        </authorList>
    </citation>
    <scope>NUCLEOTIDE SEQUENCE [LARGE SCALE GENOMIC DNA]</scope>
    <source>
        <strain>IFM 10152</strain>
    </source>
</reference>
<accession>Q5YNN4</accession>
<organism>
    <name type="scientific">Nocardia farcinica (strain IFM 10152)</name>
    <dbReference type="NCBI Taxonomy" id="247156"/>
    <lineage>
        <taxon>Bacteria</taxon>
        <taxon>Bacillati</taxon>
        <taxon>Actinomycetota</taxon>
        <taxon>Actinomycetes</taxon>
        <taxon>Mycobacteriales</taxon>
        <taxon>Nocardiaceae</taxon>
        <taxon>Nocardia</taxon>
    </lineage>
</organism>
<evidence type="ECO:0000255" key="1">
    <source>
        <dbReference type="HAMAP-Rule" id="MF_02123"/>
    </source>
</evidence>
<protein>
    <recommendedName>
        <fullName evidence="1">F420-dependent glucose-6-phosphate dehydrogenase</fullName>
        <shortName evidence="1">FGD</shortName>
        <shortName evidence="1">G6PD</shortName>
        <ecNumber evidence="1">1.1.98.2</ecNumber>
    </recommendedName>
</protein>
<keyword id="KW-0119">Carbohydrate metabolism</keyword>
<keyword id="KW-0560">Oxidoreductase</keyword>
<keyword id="KW-1185">Reference proteome</keyword>
<sequence>MGDLELGFKASAEQFGPRELVDIAVLAEEHGMDSATVSDHFQPWRHKGGHAPFSLAWMAAVGARTERIKLGTSVLTPTFRYNPAVIAQAFATMGCLYPGRVMLGVGTGEALNEIATGYQGEWPEFKERFARLREAVELMRALWTGDRVDFDGQYYRTVGASIYDVPEGGVPIYIAAGGPLVARYAGRAGDGFICTSGKGMELYTDKLMPAVAEGAAKAGRSVDSIDRMIEIKISYDTDPELALENTRFWAPLSLTAEQKHSITDPIEMEAAADALPIEQIAKRWIVASDPDQAVEQIKPYLDAGLNHLVFHAPGHDQRRFLDLFQRDLAPRLRALA</sequence>
<comment type="function">
    <text evidence="1">Catalyzes the coenzyme F420-dependent oxidation of glucose 6-phosphate (G6P) to 6-phosphogluconolactone.</text>
</comment>
<comment type="catalytic activity">
    <reaction evidence="1">
        <text>oxidized coenzyme F420-(gamma-L-Glu)(n) + D-glucose 6-phosphate + H(+) = 6-phospho-D-glucono-1,5-lactone + reduced coenzyme F420-(gamma-L-Glu)(n)</text>
        <dbReference type="Rhea" id="RHEA:27294"/>
        <dbReference type="Rhea" id="RHEA-COMP:12939"/>
        <dbReference type="Rhea" id="RHEA-COMP:14378"/>
        <dbReference type="ChEBI" id="CHEBI:15378"/>
        <dbReference type="ChEBI" id="CHEBI:57955"/>
        <dbReference type="ChEBI" id="CHEBI:61548"/>
        <dbReference type="ChEBI" id="CHEBI:133980"/>
        <dbReference type="ChEBI" id="CHEBI:139511"/>
        <dbReference type="EC" id="1.1.98.2"/>
    </reaction>
</comment>
<comment type="subunit">
    <text evidence="1">Homodimer.</text>
</comment>
<comment type="similarity">
    <text evidence="1">Belongs to the F420-dependent glucose-6-phosphate dehydrogenase family.</text>
</comment>